<reference evidence="7" key="1">
    <citation type="submission" date="2016-11" db="EMBL/GenBank/DDBJ databases">
        <authorList>
            <person name="Jaros S."/>
            <person name="Januszkiewicz K."/>
            <person name="Wedrychowicz H."/>
        </authorList>
    </citation>
    <scope>NUCLEOTIDE SEQUENCE [LARGE SCALE GENOMIC DNA]</scope>
    <source>
        <strain>DSM 16785 / JCM 12826 / AT1271</strain>
    </source>
</reference>
<reference key="2">
    <citation type="journal article" date="2022" name="Cell Rep.">
        <title>A bacterial Argonaute with efficient DNA and RNA cleavage activity guided by small DNA and RNA.</title>
        <authorList>
            <person name="Wang L."/>
            <person name="Xie X."/>
            <person name="Lv B."/>
            <person name="Liu Y."/>
            <person name="Li W."/>
            <person name="Zhang Z."/>
            <person name="Yang J."/>
            <person name="Yan G."/>
            <person name="Chen W."/>
            <person name="Zhang C."/>
            <person name="Wang F."/>
            <person name="Li C."/>
            <person name="Ma L."/>
        </authorList>
    </citation>
    <scope>FUNCTION</scope>
    <scope>CATALYTIC ACTIVITY</scope>
    <scope>PROBABLE ACTIVE SITES</scope>
    <scope>COFACTOR</scope>
    <scope>BIOPHYSICOCHEMICAL PROPERTIES</scope>
    <scope>MUTAGENESIS OF ASP-445 AND ASP-515</scope>
    <source>
        <strain>DSM 16785 / JCM 12826 / AT1271</strain>
    </source>
</reference>
<protein>
    <recommendedName>
        <fullName evidence="4">Protein argonaute</fullName>
        <shortName evidence="4">MhAgo</shortName>
        <ecNumber evidence="3">3.1.24.-</ecNumber>
        <ecNumber evidence="3">3.1.26.-</ecNumber>
    </recommendedName>
</protein>
<keyword id="KW-0238">DNA-binding</keyword>
<keyword id="KW-0255">Endonuclease</keyword>
<keyword id="KW-0378">Hydrolase</keyword>
<keyword id="KW-0464">Manganese</keyword>
<keyword id="KW-0479">Metal-binding</keyword>
<keyword id="KW-0540">Nuclease</keyword>
<keyword id="KW-0694">RNA-binding</keyword>
<feature type="chain" id="PRO_0000457786" description="Protein argonaute">
    <location>
        <begin position="1"/>
        <end position="640"/>
    </location>
</feature>
<feature type="region of interest" description="N-terminal domain" evidence="1">
    <location>
        <begin position="1"/>
        <end position="100"/>
    </location>
</feature>
<feature type="region of interest" description="Linker L1" evidence="1">
    <location>
        <begin position="101"/>
        <end position="153"/>
    </location>
</feature>
<feature type="region of interest" description="PAZ domain" evidence="1">
    <location>
        <begin position="154"/>
        <end position="209"/>
    </location>
</feature>
<feature type="region of interest" description="Linker L2" evidence="1">
    <location>
        <begin position="210"/>
        <end position="291"/>
    </location>
</feature>
<feature type="region of interest" description="Mid domain" evidence="1">
    <location>
        <begin position="292"/>
        <end position="423"/>
    </location>
</feature>
<feature type="region of interest" description="PIWI domain" evidence="1">
    <location>
        <begin position="424"/>
        <end position="640"/>
    </location>
</feature>
<feature type="active site" evidence="6">
    <location>
        <position position="445"/>
    </location>
</feature>
<feature type="active site" evidence="6">
    <location>
        <position position="481"/>
    </location>
</feature>
<feature type="active site" evidence="6">
    <location>
        <position position="515"/>
    </location>
</feature>
<feature type="active site" evidence="6">
    <location>
        <position position="623"/>
    </location>
</feature>
<feature type="binding site" evidence="2">
    <location>
        <position position="445"/>
    </location>
    <ligand>
        <name>Mn(2+)</name>
        <dbReference type="ChEBI" id="CHEBI:29035"/>
        <label>1</label>
    </ligand>
</feature>
<feature type="binding site" evidence="2">
    <location>
        <position position="445"/>
    </location>
    <ligand>
        <name>Mn(2+)</name>
        <dbReference type="ChEBI" id="CHEBI:29035"/>
        <label>2</label>
    </ligand>
</feature>
<feature type="binding site" evidence="2">
    <location>
        <position position="515"/>
    </location>
    <ligand>
        <name>Mn(2+)</name>
        <dbReference type="ChEBI" id="CHEBI:29035"/>
        <label>1</label>
    </ligand>
</feature>
<feature type="binding site" evidence="5">
    <location>
        <position position="623"/>
    </location>
    <ligand>
        <name>Mn(2+)</name>
        <dbReference type="ChEBI" id="CHEBI:29035"/>
        <label>2</label>
    </ligand>
</feature>
<feature type="mutagenesis site" description="No longer cleaves target; when associated with A-515." evidence="3">
    <original>D</original>
    <variation>A</variation>
    <location>
        <position position="445"/>
    </location>
</feature>
<feature type="mutagenesis site" description="No longer cleaves target; when associated with A-445." evidence="3">
    <original>D</original>
    <variation>A</variation>
    <location>
        <position position="515"/>
    </location>
</feature>
<proteinExistence type="evidence at protein level"/>
<comment type="function">
    <text evidence="3">A highly versatile argonaute that uses 5'-phospho- and 5'-OH- guide RNA (gRNA) or DNA (gDNA) to cleave target RNA or ssDNA (tDNA) in all possible combinations; has no detectable activity in the absence of guide. Uses short guide sequences (18-21 nucleotides (nt) on average) to bind complementary target nucleic acids resulting in target cleavage in a site-specific manner. Using 5'-phospho-gRNA or 5'-OH-gRNA the cleavage site is 10 nt downstream of the target residue base-paired with the 5'-end of the gRNA, using 5'-phospho-gDNA the cleavage site is 11 nucleotides (nt) downstream, while with 5'-OH-gDNA the cleavage site is 9 nt downstream.</text>
</comment>
<comment type="cofactor">
    <cofactor evidence="3">
        <name>Mn(2+)</name>
        <dbReference type="ChEBI" id="CHEBI:29035"/>
    </cofactor>
    <text evidence="2 3">Mn(2+) supports cleavage of all guide:target combinations, Mg(2+) only supports gRNA-directed cleavage (PubMed:36288702). Cleavage probaby requires 2 divalent metal cations (By similarity).</text>
</comment>
<comment type="biophysicochemical properties">
    <temperatureDependence>
        <text evidence="3">Optimum temperature for all combinations of guide:target is 60-65 degrees Celsius, the RNA product is more stable at 60 than 65 degrees Celsius.</text>
    </temperatureDependence>
</comment>
<comment type="domain">
    <text evidence="2">Has 4 domains (N-terminal, PAZ, Mid and PIWI). The N-terminal and PAZ domains are joined by linker L1, the PAZ and Mid domains are joined by linker L2. The domains assemble in 2 lobes; the PAZ lobe consists of the N-terminal, L1, PAZ and L2 domains, while the PIWI lobe has the Mid and PIWI domains. The PIWI domain assumes an RNase H fold and has the catalytic residues. gDNA lies between the 2 lobes, with its unpaired 5'-end anchored in the Mid lobe.</text>
</comment>
<comment type="miscellaneous">
    <text evidence="3">Unlike most prokaryotic argonautes, this is encoded in a CRISPR-cas locus.</text>
</comment>
<comment type="similarity">
    <text evidence="5">Belongs to the argonaute family. Long pAgo subfamily.</text>
</comment>
<organism>
    <name type="scientific">Marinitoga hydrogenitolerans (strain DSM 16785 / JCM 12826 / AT1271)</name>
    <dbReference type="NCBI Taxonomy" id="1122195"/>
    <lineage>
        <taxon>Bacteria</taxon>
        <taxon>Thermotogati</taxon>
        <taxon>Thermotogota</taxon>
        <taxon>Thermotogae</taxon>
        <taxon>Petrotogales</taxon>
        <taxon>Petrotogaceae</taxon>
        <taxon>Marinitoga</taxon>
    </lineage>
</organism>
<dbReference type="EC" id="3.1.24.-" evidence="3"/>
<dbReference type="EC" id="3.1.26.-" evidence="3"/>
<dbReference type="EMBL" id="FQUI01000053">
    <property type="protein sequence ID" value="SHF25574.1"/>
    <property type="molecule type" value="Genomic_DNA"/>
</dbReference>
<dbReference type="RefSeq" id="WP_072865986.1">
    <property type="nucleotide sequence ID" value="NZ_FQUI01000053.1"/>
</dbReference>
<dbReference type="SMR" id="A0A1M5A5Z8"/>
<dbReference type="STRING" id="1122195.SAMN02745164_02104"/>
<dbReference type="OrthoDB" id="42310at2"/>
<dbReference type="Proteomes" id="UP000184334">
    <property type="component" value="Unassembled WGS sequence"/>
</dbReference>
<dbReference type="GO" id="GO:0003677">
    <property type="term" value="F:DNA binding"/>
    <property type="evidence" value="ECO:0007669"/>
    <property type="project" value="UniProtKB-KW"/>
</dbReference>
<dbReference type="GO" id="GO:0004520">
    <property type="term" value="F:DNA endonuclease activity"/>
    <property type="evidence" value="ECO:0000314"/>
    <property type="project" value="UniProtKB"/>
</dbReference>
<dbReference type="GO" id="GO:0046872">
    <property type="term" value="F:metal ion binding"/>
    <property type="evidence" value="ECO:0007669"/>
    <property type="project" value="UniProtKB-KW"/>
</dbReference>
<dbReference type="GO" id="GO:0003723">
    <property type="term" value="F:RNA binding"/>
    <property type="evidence" value="ECO:0007669"/>
    <property type="project" value="UniProtKB-KW"/>
</dbReference>
<dbReference type="GO" id="GO:0004521">
    <property type="term" value="F:RNA endonuclease activity"/>
    <property type="evidence" value="ECO:0000314"/>
    <property type="project" value="UniProtKB"/>
</dbReference>
<dbReference type="Gene3D" id="3.30.420.10">
    <property type="entry name" value="Ribonuclease H-like superfamily/Ribonuclease H"/>
    <property type="match status" value="1"/>
</dbReference>
<dbReference type="InterPro" id="IPR054434">
    <property type="entry name" value="Ago_MID_bact"/>
</dbReference>
<dbReference type="InterPro" id="IPR054387">
    <property type="entry name" value="Ago_N_bact"/>
</dbReference>
<dbReference type="InterPro" id="IPR003165">
    <property type="entry name" value="Piwi"/>
</dbReference>
<dbReference type="InterPro" id="IPR012337">
    <property type="entry name" value="RNaseH-like_sf"/>
</dbReference>
<dbReference type="InterPro" id="IPR036397">
    <property type="entry name" value="RNaseH_sf"/>
</dbReference>
<dbReference type="Pfam" id="PF22362">
    <property type="entry name" value="Ago_MID_bact"/>
    <property type="match status" value="1"/>
</dbReference>
<dbReference type="Pfam" id="PF22136">
    <property type="entry name" value="MpAgo_N-like"/>
    <property type="match status" value="1"/>
</dbReference>
<dbReference type="SMART" id="SM00950">
    <property type="entry name" value="Piwi"/>
    <property type="match status" value="1"/>
</dbReference>
<dbReference type="SUPFAM" id="SSF53098">
    <property type="entry name" value="Ribonuclease H-like"/>
    <property type="match status" value="1"/>
</dbReference>
<sequence>MYLNLYEIKIPYRVKRLYYFNKENDPKEFARNLSRVNNIRFNDSKDLVWLEIPDIDFKITPQQAEKYKIEKNEIIGEKEDSDLFVKTIYRYIKKKFIDNNFYYKRGNNYISINDKFPLDSNTNVNAHLTYKIKLYKINERYYISVLPKFTFLSDKPALESPIKSTYLFNIKSGKTFPYISGLNGVLKIDLGENGIKEVLFPENYYFNFTSKEAEKFGFSKEIHNIYKEKIFSGYKKIKQSLYFLEDIININNYNLTMDKKIYVNIEYEFKKGISRNIKDVFKYSFYKNDQKIKIAFFFSSKKQIYEIQRSLKMLFQNKNSIFYQTIYEMGFSKVIFLREPKTNSSAFMYNPETFEISNKDFFENLEGNIMAIIILDKFLGNIDSLIQKFPENLILQPILKEKLEKIQPYIIKSYVYKMGNFIPECQPYVIRNLKDKNKTLYIGIDLSHDNYLKKSNLAISAVNNFGDIIYLNKYKNLELNEKMNLDIVEKEYIQILNEYYERNKNYPENIIVLRDGRYLEDIEIIKNILNIENIKYSLIEVNKSVNINSCEDLKEWIIKLSDNNFIYYPKTYFNQKGVEIKIIENNTDYNNEKILEQVYSLTRVVHPTPYVNYRLPYPLQVVNKVALTELEWKLYIPYMK</sequence>
<name>AGO_MARH1</name>
<gene>
    <name evidence="5" type="primary">ago</name>
    <name evidence="7" type="ORF">SAMN02745164_02104</name>
</gene>
<accession>A0A1M5A5Z8</accession>
<evidence type="ECO:0000250" key="1">
    <source>
        <dbReference type="UniProtKB" id="H2J4R4"/>
    </source>
</evidence>
<evidence type="ECO:0000250" key="2">
    <source>
        <dbReference type="UniProtKB" id="Q746M7"/>
    </source>
</evidence>
<evidence type="ECO:0000269" key="3">
    <source>
    </source>
</evidence>
<evidence type="ECO:0000303" key="4">
    <source>
    </source>
</evidence>
<evidence type="ECO:0000305" key="5"/>
<evidence type="ECO:0000305" key="6">
    <source>
    </source>
</evidence>
<evidence type="ECO:0000312" key="7">
    <source>
        <dbReference type="EMBL" id="SHF25574.1"/>
    </source>
</evidence>